<comment type="function">
    <text evidence="1">Catalyzes the formation of pyridoxal 5'-phosphate from ribose 5-phosphate (RBP), glyceraldehyde 3-phosphate (G3P) and ammonia. The ammonia is provided by the PdxT subunit. Can also use ribulose 5-phosphate and dihydroxyacetone phosphate as substrates, resulting from enzyme-catalyzed isomerization of RBP and G3P, respectively.</text>
</comment>
<comment type="catalytic activity">
    <reaction evidence="1">
        <text>aldehydo-D-ribose 5-phosphate + D-glyceraldehyde 3-phosphate + L-glutamine = pyridoxal 5'-phosphate + L-glutamate + phosphate + 3 H2O + H(+)</text>
        <dbReference type="Rhea" id="RHEA:31507"/>
        <dbReference type="ChEBI" id="CHEBI:15377"/>
        <dbReference type="ChEBI" id="CHEBI:15378"/>
        <dbReference type="ChEBI" id="CHEBI:29985"/>
        <dbReference type="ChEBI" id="CHEBI:43474"/>
        <dbReference type="ChEBI" id="CHEBI:58273"/>
        <dbReference type="ChEBI" id="CHEBI:58359"/>
        <dbReference type="ChEBI" id="CHEBI:59776"/>
        <dbReference type="ChEBI" id="CHEBI:597326"/>
        <dbReference type="EC" id="4.3.3.6"/>
    </reaction>
</comment>
<comment type="pathway">
    <text evidence="1">Cofactor biosynthesis; pyridoxal 5'-phosphate biosynthesis.</text>
</comment>
<comment type="subunit">
    <text evidence="1">In the presence of PdxT, forms a dodecamer of heterodimers.</text>
</comment>
<comment type="similarity">
    <text evidence="1">Belongs to the PdxS/SNZ family.</text>
</comment>
<evidence type="ECO:0000255" key="1">
    <source>
        <dbReference type="HAMAP-Rule" id="MF_01824"/>
    </source>
</evidence>
<gene>
    <name evidence="1" type="primary">pdxS</name>
    <name type="ordered locus">Haur_3808</name>
</gene>
<name>PDXS_HERA2</name>
<reference key="1">
    <citation type="journal article" date="2011" name="Stand. Genomic Sci.">
        <title>Complete genome sequence of the filamentous gliding predatory bacterium Herpetosiphon aurantiacus type strain (114-95(T)).</title>
        <authorList>
            <person name="Kiss H."/>
            <person name="Nett M."/>
            <person name="Domin N."/>
            <person name="Martin K."/>
            <person name="Maresca J.A."/>
            <person name="Copeland A."/>
            <person name="Lapidus A."/>
            <person name="Lucas S."/>
            <person name="Berry K.W."/>
            <person name="Glavina Del Rio T."/>
            <person name="Dalin E."/>
            <person name="Tice H."/>
            <person name="Pitluck S."/>
            <person name="Richardson P."/>
            <person name="Bruce D."/>
            <person name="Goodwin L."/>
            <person name="Han C."/>
            <person name="Detter J.C."/>
            <person name="Schmutz J."/>
            <person name="Brettin T."/>
            <person name="Land M."/>
            <person name="Hauser L."/>
            <person name="Kyrpides N.C."/>
            <person name="Ivanova N."/>
            <person name="Goeker M."/>
            <person name="Woyke T."/>
            <person name="Klenk H.P."/>
            <person name="Bryant D.A."/>
        </authorList>
    </citation>
    <scope>NUCLEOTIDE SEQUENCE [LARGE SCALE GENOMIC DNA]</scope>
    <source>
        <strain>ATCC 23779 / DSM 785 / 114-95</strain>
    </source>
</reference>
<feature type="chain" id="PRO_1000188230" description="Pyridoxal 5'-phosphate synthase subunit PdxS">
    <location>
        <begin position="1"/>
        <end position="293"/>
    </location>
</feature>
<feature type="active site" description="Schiff-base intermediate with D-ribose 5-phosphate" evidence="1">
    <location>
        <position position="80"/>
    </location>
</feature>
<feature type="binding site" evidence="1">
    <location>
        <position position="23"/>
    </location>
    <ligand>
        <name>D-ribose 5-phosphate</name>
        <dbReference type="ChEBI" id="CHEBI:78346"/>
    </ligand>
</feature>
<feature type="binding site" evidence="1">
    <location>
        <position position="152"/>
    </location>
    <ligand>
        <name>D-ribose 5-phosphate</name>
        <dbReference type="ChEBI" id="CHEBI:78346"/>
    </ligand>
</feature>
<feature type="binding site" evidence="1">
    <location>
        <position position="164"/>
    </location>
    <ligand>
        <name>D-glyceraldehyde 3-phosphate</name>
        <dbReference type="ChEBI" id="CHEBI:59776"/>
    </ligand>
</feature>
<feature type="binding site" evidence="1">
    <location>
        <position position="213"/>
    </location>
    <ligand>
        <name>D-ribose 5-phosphate</name>
        <dbReference type="ChEBI" id="CHEBI:78346"/>
    </ligand>
</feature>
<feature type="binding site" evidence="1">
    <location>
        <begin position="234"/>
        <end position="235"/>
    </location>
    <ligand>
        <name>D-ribose 5-phosphate</name>
        <dbReference type="ChEBI" id="CHEBI:78346"/>
    </ligand>
</feature>
<accession>A9B891</accession>
<protein>
    <recommendedName>
        <fullName evidence="1">Pyridoxal 5'-phosphate synthase subunit PdxS</fullName>
        <shortName evidence="1">PLP synthase subunit PdxS</shortName>
        <ecNumber evidence="1">4.3.3.6</ecNumber>
    </recommendedName>
    <alternativeName>
        <fullName evidence="1">Pdx1</fullName>
    </alternativeName>
</protein>
<keyword id="KW-0456">Lyase</keyword>
<keyword id="KW-0663">Pyridoxal phosphate</keyword>
<keyword id="KW-0704">Schiff base</keyword>
<organism>
    <name type="scientific">Herpetosiphon aurantiacus (strain ATCC 23779 / DSM 785 / 114-95)</name>
    <dbReference type="NCBI Taxonomy" id="316274"/>
    <lineage>
        <taxon>Bacteria</taxon>
        <taxon>Bacillati</taxon>
        <taxon>Chloroflexota</taxon>
        <taxon>Chloroflexia</taxon>
        <taxon>Herpetosiphonales</taxon>
        <taxon>Herpetosiphonaceae</taxon>
        <taxon>Herpetosiphon</taxon>
    </lineage>
</organism>
<proteinExistence type="inferred from homology"/>
<dbReference type="EC" id="4.3.3.6" evidence="1"/>
<dbReference type="EMBL" id="CP000875">
    <property type="protein sequence ID" value="ABX06444.1"/>
    <property type="molecule type" value="Genomic_DNA"/>
</dbReference>
<dbReference type="SMR" id="A9B891"/>
<dbReference type="FunCoup" id="A9B891">
    <property type="interactions" value="256"/>
</dbReference>
<dbReference type="STRING" id="316274.Haur_3808"/>
<dbReference type="KEGG" id="hau:Haur_3808"/>
<dbReference type="eggNOG" id="COG0214">
    <property type="taxonomic scope" value="Bacteria"/>
</dbReference>
<dbReference type="HOGENOM" id="CLU_055352_1_0_0"/>
<dbReference type="InParanoid" id="A9B891"/>
<dbReference type="UniPathway" id="UPA00245"/>
<dbReference type="Proteomes" id="UP000000787">
    <property type="component" value="Chromosome"/>
</dbReference>
<dbReference type="GO" id="GO:0036381">
    <property type="term" value="F:pyridoxal 5'-phosphate synthase (glutamine hydrolysing) activity"/>
    <property type="evidence" value="ECO:0007669"/>
    <property type="project" value="UniProtKB-UniRule"/>
</dbReference>
<dbReference type="GO" id="GO:0006520">
    <property type="term" value="P:amino acid metabolic process"/>
    <property type="evidence" value="ECO:0007669"/>
    <property type="project" value="TreeGrafter"/>
</dbReference>
<dbReference type="GO" id="GO:0042823">
    <property type="term" value="P:pyridoxal phosphate biosynthetic process"/>
    <property type="evidence" value="ECO:0007669"/>
    <property type="project" value="UniProtKB-UniRule"/>
</dbReference>
<dbReference type="GO" id="GO:0008615">
    <property type="term" value="P:pyridoxine biosynthetic process"/>
    <property type="evidence" value="ECO:0007669"/>
    <property type="project" value="TreeGrafter"/>
</dbReference>
<dbReference type="CDD" id="cd04727">
    <property type="entry name" value="pdxS"/>
    <property type="match status" value="1"/>
</dbReference>
<dbReference type="FunFam" id="3.20.20.70:FF:000001">
    <property type="entry name" value="Pyridoxine biosynthesis protein PDX1"/>
    <property type="match status" value="1"/>
</dbReference>
<dbReference type="Gene3D" id="3.20.20.70">
    <property type="entry name" value="Aldolase class I"/>
    <property type="match status" value="1"/>
</dbReference>
<dbReference type="HAMAP" id="MF_01824">
    <property type="entry name" value="PdxS"/>
    <property type="match status" value="1"/>
</dbReference>
<dbReference type="InterPro" id="IPR013785">
    <property type="entry name" value="Aldolase_TIM"/>
</dbReference>
<dbReference type="InterPro" id="IPR001852">
    <property type="entry name" value="PdxS/SNZ"/>
</dbReference>
<dbReference type="InterPro" id="IPR033755">
    <property type="entry name" value="PdxS/SNZ_N"/>
</dbReference>
<dbReference type="InterPro" id="IPR011060">
    <property type="entry name" value="RibuloseP-bd_barrel"/>
</dbReference>
<dbReference type="NCBIfam" id="NF003215">
    <property type="entry name" value="PRK04180.1"/>
    <property type="match status" value="1"/>
</dbReference>
<dbReference type="NCBIfam" id="TIGR00343">
    <property type="entry name" value="pyridoxal 5'-phosphate synthase lyase subunit PdxS"/>
    <property type="match status" value="1"/>
</dbReference>
<dbReference type="PANTHER" id="PTHR31829">
    <property type="entry name" value="PYRIDOXAL 5'-PHOSPHATE SYNTHASE SUBUNIT SNZ1-RELATED"/>
    <property type="match status" value="1"/>
</dbReference>
<dbReference type="PANTHER" id="PTHR31829:SF0">
    <property type="entry name" value="PYRIDOXAL 5'-PHOSPHATE SYNTHASE SUBUNIT SNZ1-RELATED"/>
    <property type="match status" value="1"/>
</dbReference>
<dbReference type="Pfam" id="PF01680">
    <property type="entry name" value="SOR_SNZ"/>
    <property type="match status" value="1"/>
</dbReference>
<dbReference type="PIRSF" id="PIRSF029271">
    <property type="entry name" value="Pdx1"/>
    <property type="match status" value="1"/>
</dbReference>
<dbReference type="SUPFAM" id="SSF51366">
    <property type="entry name" value="Ribulose-phoshate binding barrel"/>
    <property type="match status" value="1"/>
</dbReference>
<dbReference type="PROSITE" id="PS01235">
    <property type="entry name" value="PDXS_SNZ_1"/>
    <property type="match status" value="1"/>
</dbReference>
<dbReference type="PROSITE" id="PS51129">
    <property type="entry name" value="PDXS_SNZ_2"/>
    <property type="match status" value="1"/>
</dbReference>
<sequence>METSTFTTKVGLAQMLKGGVIMDVVTPDQAKIAEEAGAVAVMALERVPADIRKDGGVARMSDPEMIQGIIEAVTIPVMAKSRIGHFVEAQILEAIGVDYIDESEVLTPADEEHHTNKHNFKVPFVCGARNLGEALRRITEGAAMIRTKGEAGTGNVVEAVRHARTMFAEIRRLQTLDPDELFVAAKNLQAPYELVKQIAELGRLPVVNFAAGGIATPADAALMMQLGVDGVFVGSGIFKSGNPAKRAKAIVEATTHFRDAKLLAEISRNLGEAMVGINIDTIPENELLAKRGW</sequence>